<name>CYB_PANTS</name>
<comment type="function">
    <text evidence="2">Component of the ubiquinol-cytochrome c reductase complex (complex III or cytochrome b-c1 complex) that is part of the mitochondrial respiratory chain. The b-c1 complex mediates electron transfer from ubiquinol to cytochrome c. Contributes to the generation of a proton gradient across the mitochondrial membrane that is then used for ATP synthesis.</text>
</comment>
<comment type="cofactor">
    <cofactor evidence="2">
        <name>heme b</name>
        <dbReference type="ChEBI" id="CHEBI:60344"/>
    </cofactor>
    <text evidence="2">Binds 2 heme b groups non-covalently.</text>
</comment>
<comment type="subunit">
    <text evidence="2">The cytochrome bc1 complex contains 11 subunits: 3 respiratory subunits (MT-CYB, CYC1 and UQCRFS1), 2 core proteins (UQCRC1 and UQCRC2) and 6 low-molecular weight proteins (UQCRH/QCR6, UQCRB/QCR7, UQCRQ/QCR8, UQCR10/QCR9, UQCR11/QCR10 and a cleavage product of UQCRFS1). This cytochrome bc1 complex then forms a dimer.</text>
</comment>
<comment type="subcellular location">
    <subcellularLocation>
        <location evidence="2">Mitochondrion inner membrane</location>
        <topology evidence="2">Multi-pass membrane protein</topology>
    </subcellularLocation>
</comment>
<comment type="miscellaneous">
    <text evidence="1">Heme 1 (or BL or b562) is low-potential and absorbs at about 562 nm, and heme 2 (or BH or b566) is high-potential and absorbs at about 566 nm.</text>
</comment>
<comment type="similarity">
    <text evidence="3 4">Belongs to the cytochrome b family.</text>
</comment>
<comment type="caution">
    <text evidence="2">The full-length protein contains only eight transmembrane helices, not nine as predicted by bioinformatics tools.</text>
</comment>
<keyword id="KW-0249">Electron transport</keyword>
<keyword id="KW-0349">Heme</keyword>
<keyword id="KW-0408">Iron</keyword>
<keyword id="KW-0472">Membrane</keyword>
<keyword id="KW-0479">Metal-binding</keyword>
<keyword id="KW-0496">Mitochondrion</keyword>
<keyword id="KW-0999">Mitochondrion inner membrane</keyword>
<keyword id="KW-0679">Respiratory chain</keyword>
<keyword id="KW-0812">Transmembrane</keyword>
<keyword id="KW-1133">Transmembrane helix</keyword>
<keyword id="KW-0813">Transport</keyword>
<keyword id="KW-0830">Ubiquinone</keyword>
<protein>
    <recommendedName>
        <fullName>Cytochrome b</fullName>
    </recommendedName>
    <alternativeName>
        <fullName>Complex III subunit 3</fullName>
    </alternativeName>
    <alternativeName>
        <fullName>Complex III subunit III</fullName>
    </alternativeName>
    <alternativeName>
        <fullName>Cytochrome b-c1 complex subunit 3</fullName>
    </alternativeName>
    <alternativeName>
        <fullName>Ubiquinol-cytochrome-c reductase complex cytochrome b subunit</fullName>
    </alternativeName>
</protein>
<sequence>MTNIRKSHPLIKIINHSFIDLPAPSNISAWWNFGSLLGVCLILQILTGLFLAMHYTSDTMTAFSSVTHICRDVNYGWIIRYLHANGASMFFICLYMHVGRGMYYGSYTFSETWNIGIVLLFTVMATAFMGYVLPWGQMSFWGATVITNLLSAIPYIGTDLVEWIWGGFSVDKATLTRFFAFHFTLPFIVSALAAVHLLFLHETGSNNPSGMVSDSDKIPFHPYYTIKDILGLLVLVLTLMLLVLFSPDLLGDPDNYIPANPLNTPPHIKPEWYFLFAYAILRSIPNKLGGVLALVLSILILAIIPALHTSKQRGMMFRPLSQCLFWLLVADLLTLTWIGGQPVEHPFIAIGQLASILYFFILLVLMPISGIIENRLLKW</sequence>
<dbReference type="EMBL" id="AF053043">
    <property type="protein sequence ID" value="AAC08562.1"/>
    <property type="molecule type" value="Genomic_DNA"/>
</dbReference>
<dbReference type="SMR" id="P68091"/>
<dbReference type="GO" id="GO:0005743">
    <property type="term" value="C:mitochondrial inner membrane"/>
    <property type="evidence" value="ECO:0007669"/>
    <property type="project" value="UniProtKB-SubCell"/>
</dbReference>
<dbReference type="GO" id="GO:0045275">
    <property type="term" value="C:respiratory chain complex III"/>
    <property type="evidence" value="ECO:0007669"/>
    <property type="project" value="InterPro"/>
</dbReference>
<dbReference type="GO" id="GO:0046872">
    <property type="term" value="F:metal ion binding"/>
    <property type="evidence" value="ECO:0007669"/>
    <property type="project" value="UniProtKB-KW"/>
</dbReference>
<dbReference type="GO" id="GO:0008121">
    <property type="term" value="F:ubiquinol-cytochrome-c reductase activity"/>
    <property type="evidence" value="ECO:0007669"/>
    <property type="project" value="InterPro"/>
</dbReference>
<dbReference type="GO" id="GO:0006122">
    <property type="term" value="P:mitochondrial electron transport, ubiquinol to cytochrome c"/>
    <property type="evidence" value="ECO:0007669"/>
    <property type="project" value="TreeGrafter"/>
</dbReference>
<dbReference type="CDD" id="cd00290">
    <property type="entry name" value="cytochrome_b_C"/>
    <property type="match status" value="1"/>
</dbReference>
<dbReference type="CDD" id="cd00284">
    <property type="entry name" value="Cytochrome_b_N"/>
    <property type="match status" value="1"/>
</dbReference>
<dbReference type="FunFam" id="1.20.810.10:FF:000002">
    <property type="entry name" value="Cytochrome b"/>
    <property type="match status" value="1"/>
</dbReference>
<dbReference type="Gene3D" id="1.20.810.10">
    <property type="entry name" value="Cytochrome Bc1 Complex, Chain C"/>
    <property type="match status" value="1"/>
</dbReference>
<dbReference type="InterPro" id="IPR005798">
    <property type="entry name" value="Cyt_b/b6_C"/>
</dbReference>
<dbReference type="InterPro" id="IPR036150">
    <property type="entry name" value="Cyt_b/b6_C_sf"/>
</dbReference>
<dbReference type="InterPro" id="IPR005797">
    <property type="entry name" value="Cyt_b/b6_N"/>
</dbReference>
<dbReference type="InterPro" id="IPR027387">
    <property type="entry name" value="Cytb/b6-like_sf"/>
</dbReference>
<dbReference type="InterPro" id="IPR030689">
    <property type="entry name" value="Cytochrome_b"/>
</dbReference>
<dbReference type="InterPro" id="IPR048260">
    <property type="entry name" value="Cytochrome_b_C_euk/bac"/>
</dbReference>
<dbReference type="InterPro" id="IPR048259">
    <property type="entry name" value="Cytochrome_b_N_euk/bac"/>
</dbReference>
<dbReference type="InterPro" id="IPR016174">
    <property type="entry name" value="Di-haem_cyt_TM"/>
</dbReference>
<dbReference type="PANTHER" id="PTHR19271">
    <property type="entry name" value="CYTOCHROME B"/>
    <property type="match status" value="1"/>
</dbReference>
<dbReference type="PANTHER" id="PTHR19271:SF16">
    <property type="entry name" value="CYTOCHROME B"/>
    <property type="match status" value="1"/>
</dbReference>
<dbReference type="Pfam" id="PF00032">
    <property type="entry name" value="Cytochrom_B_C"/>
    <property type="match status" value="1"/>
</dbReference>
<dbReference type="Pfam" id="PF00033">
    <property type="entry name" value="Cytochrome_B"/>
    <property type="match status" value="1"/>
</dbReference>
<dbReference type="PIRSF" id="PIRSF038885">
    <property type="entry name" value="COB"/>
    <property type="match status" value="1"/>
</dbReference>
<dbReference type="SUPFAM" id="SSF81648">
    <property type="entry name" value="a domain/subunit of cytochrome bc1 complex (Ubiquinol-cytochrome c reductase)"/>
    <property type="match status" value="1"/>
</dbReference>
<dbReference type="SUPFAM" id="SSF81342">
    <property type="entry name" value="Transmembrane di-heme cytochromes"/>
    <property type="match status" value="1"/>
</dbReference>
<dbReference type="PROSITE" id="PS51003">
    <property type="entry name" value="CYTB_CTER"/>
    <property type="match status" value="1"/>
</dbReference>
<dbReference type="PROSITE" id="PS51002">
    <property type="entry name" value="CYTB_NTER"/>
    <property type="match status" value="1"/>
</dbReference>
<reference key="1">
    <citation type="journal article" date="1998" name="Anim. Conserv.">
        <title>Sorting out tigers (Panthera tigris): mitochondrial sequences, nuclear inserts, systematics, and conservation genetics.</title>
        <authorList>
            <person name="Cracraft J."/>
            <person name="Feinstein J."/>
            <person name="Vaughn J."/>
            <person name="Helm-Bychowski K."/>
        </authorList>
    </citation>
    <scope>NUCLEOTIDE SEQUENCE [GENOMIC DNA]</scope>
    <source>
        <strain>Su4</strain>
    </source>
</reference>
<feature type="chain" id="PRO_0000061344" description="Cytochrome b">
    <location>
        <begin position="1"/>
        <end position="379"/>
    </location>
</feature>
<feature type="transmembrane region" description="Helical" evidence="2">
    <location>
        <begin position="33"/>
        <end position="53"/>
    </location>
</feature>
<feature type="transmembrane region" description="Helical" evidence="2">
    <location>
        <begin position="77"/>
        <end position="98"/>
    </location>
</feature>
<feature type="transmembrane region" description="Helical" evidence="2">
    <location>
        <begin position="113"/>
        <end position="133"/>
    </location>
</feature>
<feature type="transmembrane region" description="Helical" evidence="2">
    <location>
        <begin position="178"/>
        <end position="198"/>
    </location>
</feature>
<feature type="transmembrane region" description="Helical" evidence="2">
    <location>
        <begin position="226"/>
        <end position="246"/>
    </location>
</feature>
<feature type="transmembrane region" description="Helical" evidence="2">
    <location>
        <begin position="288"/>
        <end position="308"/>
    </location>
</feature>
<feature type="transmembrane region" description="Helical" evidence="2">
    <location>
        <begin position="320"/>
        <end position="340"/>
    </location>
</feature>
<feature type="transmembrane region" description="Helical" evidence="2">
    <location>
        <begin position="347"/>
        <end position="367"/>
    </location>
</feature>
<feature type="binding site" description="axial binding residue" evidence="2">
    <location>
        <position position="83"/>
    </location>
    <ligand>
        <name>heme b</name>
        <dbReference type="ChEBI" id="CHEBI:60344"/>
        <label>b562</label>
    </ligand>
    <ligandPart>
        <name>Fe</name>
        <dbReference type="ChEBI" id="CHEBI:18248"/>
    </ligandPart>
</feature>
<feature type="binding site" description="axial binding residue" evidence="2">
    <location>
        <position position="97"/>
    </location>
    <ligand>
        <name>heme b</name>
        <dbReference type="ChEBI" id="CHEBI:60344"/>
        <label>b566</label>
    </ligand>
    <ligandPart>
        <name>Fe</name>
        <dbReference type="ChEBI" id="CHEBI:18248"/>
    </ligandPart>
</feature>
<feature type="binding site" description="axial binding residue" evidence="2">
    <location>
        <position position="182"/>
    </location>
    <ligand>
        <name>heme b</name>
        <dbReference type="ChEBI" id="CHEBI:60344"/>
        <label>b562</label>
    </ligand>
    <ligandPart>
        <name>Fe</name>
        <dbReference type="ChEBI" id="CHEBI:18248"/>
    </ligandPart>
</feature>
<feature type="binding site" description="axial binding residue" evidence="2">
    <location>
        <position position="196"/>
    </location>
    <ligand>
        <name>heme b</name>
        <dbReference type="ChEBI" id="CHEBI:60344"/>
        <label>b566</label>
    </ligand>
    <ligandPart>
        <name>Fe</name>
        <dbReference type="ChEBI" id="CHEBI:18248"/>
    </ligandPart>
</feature>
<feature type="binding site" evidence="2">
    <location>
        <position position="201"/>
    </location>
    <ligand>
        <name>a ubiquinone</name>
        <dbReference type="ChEBI" id="CHEBI:16389"/>
    </ligand>
</feature>
<organism>
    <name type="scientific">Panthera tigris sumatrae</name>
    <name type="common">Sumatran tiger</name>
    <name type="synonym">Panthera sumatrae</name>
    <dbReference type="NCBI Taxonomy" id="9695"/>
    <lineage>
        <taxon>Eukaryota</taxon>
        <taxon>Metazoa</taxon>
        <taxon>Chordata</taxon>
        <taxon>Craniata</taxon>
        <taxon>Vertebrata</taxon>
        <taxon>Euteleostomi</taxon>
        <taxon>Mammalia</taxon>
        <taxon>Eutheria</taxon>
        <taxon>Laurasiatheria</taxon>
        <taxon>Carnivora</taxon>
        <taxon>Feliformia</taxon>
        <taxon>Felidae</taxon>
        <taxon>Pantherinae</taxon>
        <taxon>Panthera</taxon>
    </lineage>
</organism>
<accession>P68091</accession>
<accession>Q35655</accession>
<gene>
    <name type="primary">MT-CYB</name>
    <name type="synonym">COB</name>
    <name type="synonym">CYTB</name>
    <name type="synonym">MTCYB</name>
</gene>
<proteinExistence type="inferred from homology"/>
<evidence type="ECO:0000250" key="1"/>
<evidence type="ECO:0000250" key="2">
    <source>
        <dbReference type="UniProtKB" id="P00157"/>
    </source>
</evidence>
<evidence type="ECO:0000255" key="3">
    <source>
        <dbReference type="PROSITE-ProRule" id="PRU00967"/>
    </source>
</evidence>
<evidence type="ECO:0000255" key="4">
    <source>
        <dbReference type="PROSITE-ProRule" id="PRU00968"/>
    </source>
</evidence>
<geneLocation type="mitochondrion"/>